<name>RL27A_RABIT</name>
<protein>
    <recommendedName>
        <fullName>Large ribosomal subunit protein uL15</fullName>
    </recommendedName>
    <alternativeName>
        <fullName>60S ribosomal protein L27a</fullName>
    </alternativeName>
</protein>
<accession>G1SNY0</accession>
<gene>
    <name type="primary">RPL27A</name>
</gene>
<proteinExistence type="evidence at protein level"/>
<dbReference type="EMBL" id="AAGW02007931">
    <property type="status" value="NOT_ANNOTATED_CDS"/>
    <property type="molecule type" value="Genomic_DNA"/>
</dbReference>
<dbReference type="EMBL" id="AAGW02025357">
    <property type="status" value="NOT_ANNOTATED_CDS"/>
    <property type="molecule type" value="Genomic_DNA"/>
</dbReference>
<dbReference type="RefSeq" id="XP_002708842.1">
    <property type="nucleotide sequence ID" value="XM_002708796.5"/>
</dbReference>
<dbReference type="RefSeq" id="XP_002717615.1">
    <property type="nucleotide sequence ID" value="XM_002717569.3"/>
</dbReference>
<dbReference type="PDB" id="3JAG">
    <property type="method" value="EM"/>
    <property type="resolution" value="3.65 A"/>
    <property type="chains" value="a=2-148"/>
</dbReference>
<dbReference type="PDB" id="3JAH">
    <property type="method" value="EM"/>
    <property type="resolution" value="3.45 A"/>
    <property type="chains" value="a=2-148"/>
</dbReference>
<dbReference type="PDB" id="3JAI">
    <property type="method" value="EM"/>
    <property type="resolution" value="3.65 A"/>
    <property type="chains" value="a=2-148"/>
</dbReference>
<dbReference type="PDB" id="5LZS">
    <property type="method" value="EM"/>
    <property type="resolution" value="3.31 A"/>
    <property type="chains" value="a=1-148"/>
</dbReference>
<dbReference type="PDB" id="5LZT">
    <property type="method" value="EM"/>
    <property type="resolution" value="3.65 A"/>
    <property type="chains" value="a=1-148"/>
</dbReference>
<dbReference type="PDB" id="5LZU">
    <property type="method" value="EM"/>
    <property type="resolution" value="3.75 A"/>
    <property type="chains" value="a=1-148"/>
</dbReference>
<dbReference type="PDB" id="5LZV">
    <property type="method" value="EM"/>
    <property type="resolution" value="3.35 A"/>
    <property type="chains" value="a=1-148"/>
</dbReference>
<dbReference type="PDB" id="5LZW">
    <property type="method" value="EM"/>
    <property type="resolution" value="3.53 A"/>
    <property type="chains" value="a=1-148"/>
</dbReference>
<dbReference type="PDB" id="5LZX">
    <property type="method" value="EM"/>
    <property type="resolution" value="3.67 A"/>
    <property type="chains" value="a=1-148"/>
</dbReference>
<dbReference type="PDB" id="5LZY">
    <property type="method" value="EM"/>
    <property type="resolution" value="3.99 A"/>
    <property type="chains" value="a=1-148"/>
</dbReference>
<dbReference type="PDB" id="5LZZ">
    <property type="method" value="EM"/>
    <property type="resolution" value="3.47 A"/>
    <property type="chains" value="a=1-148"/>
</dbReference>
<dbReference type="PDB" id="6D90">
    <property type="method" value="EM"/>
    <property type="resolution" value="3.20 A"/>
    <property type="chains" value="a=1-148"/>
</dbReference>
<dbReference type="PDB" id="6D9J">
    <property type="method" value="EM"/>
    <property type="resolution" value="3.20 A"/>
    <property type="chains" value="a=1-148"/>
</dbReference>
<dbReference type="PDB" id="6FTG">
    <property type="method" value="EM"/>
    <property type="resolution" value="9.10 A"/>
    <property type="chains" value="a=2-148"/>
</dbReference>
<dbReference type="PDB" id="6FTI">
    <property type="method" value="EM"/>
    <property type="resolution" value="4.20 A"/>
    <property type="chains" value="a=2-148"/>
</dbReference>
<dbReference type="PDB" id="6FTJ">
    <property type="method" value="EM"/>
    <property type="resolution" value="4.70 A"/>
    <property type="chains" value="a=2-148"/>
</dbReference>
<dbReference type="PDB" id="6HCJ">
    <property type="method" value="EM"/>
    <property type="resolution" value="3.80 A"/>
    <property type="chains" value="a3=1-148"/>
</dbReference>
<dbReference type="PDB" id="6MTB">
    <property type="method" value="EM"/>
    <property type="resolution" value="3.60 A"/>
    <property type="chains" value="a=2-148"/>
</dbReference>
<dbReference type="PDB" id="6MTC">
    <property type="method" value="EM"/>
    <property type="resolution" value="3.40 A"/>
    <property type="chains" value="a=2-148"/>
</dbReference>
<dbReference type="PDB" id="6MTD">
    <property type="method" value="EM"/>
    <property type="resolution" value="3.30 A"/>
    <property type="chains" value="a=2-148"/>
</dbReference>
<dbReference type="PDB" id="6MTE">
    <property type="method" value="EM"/>
    <property type="resolution" value="3.40 A"/>
    <property type="chains" value="a=2-148"/>
</dbReference>
<dbReference type="PDB" id="6P5I">
    <property type="method" value="EM"/>
    <property type="resolution" value="3.10 A"/>
    <property type="chains" value="Aa=1-148"/>
</dbReference>
<dbReference type="PDB" id="6P5J">
    <property type="method" value="EM"/>
    <property type="resolution" value="3.10 A"/>
    <property type="chains" value="Aa=1-148"/>
</dbReference>
<dbReference type="PDB" id="6P5K">
    <property type="method" value="EM"/>
    <property type="resolution" value="3.10 A"/>
    <property type="chains" value="Aa=1-148"/>
</dbReference>
<dbReference type="PDB" id="6P5N">
    <property type="method" value="EM"/>
    <property type="resolution" value="3.20 A"/>
    <property type="chains" value="Aa=1-148"/>
</dbReference>
<dbReference type="PDB" id="6R5Q">
    <property type="method" value="EM"/>
    <property type="resolution" value="3.00 A"/>
    <property type="chains" value="a=2-148"/>
</dbReference>
<dbReference type="PDB" id="6R6G">
    <property type="method" value="EM"/>
    <property type="resolution" value="3.70 A"/>
    <property type="chains" value="a=2-148"/>
</dbReference>
<dbReference type="PDB" id="6R6P">
    <property type="method" value="EM"/>
    <property type="resolution" value="3.10 A"/>
    <property type="chains" value="a=2-148"/>
</dbReference>
<dbReference type="PDB" id="6R7Q">
    <property type="method" value="EM"/>
    <property type="resolution" value="3.90 A"/>
    <property type="chains" value="a=2-148"/>
</dbReference>
<dbReference type="PDB" id="6SGC">
    <property type="method" value="EM"/>
    <property type="resolution" value="2.80 A"/>
    <property type="chains" value="a2=1-148"/>
</dbReference>
<dbReference type="PDB" id="6T59">
    <property type="method" value="EM"/>
    <property type="resolution" value="3.11 A"/>
    <property type="chains" value="a3=1-148"/>
</dbReference>
<dbReference type="PDB" id="6ZVK">
    <property type="method" value="EM"/>
    <property type="resolution" value="3.49 A"/>
    <property type="chains" value="q2=2-148"/>
</dbReference>
<dbReference type="PDB" id="7A01">
    <property type="method" value="EM"/>
    <property type="resolution" value="3.60 A"/>
    <property type="chains" value="q2=2-148"/>
</dbReference>
<dbReference type="PDB" id="7MDZ">
    <property type="method" value="EM"/>
    <property type="resolution" value="3.20 A"/>
    <property type="chains" value="a=1-148"/>
</dbReference>
<dbReference type="PDB" id="7NFX">
    <property type="method" value="EM"/>
    <property type="resolution" value="3.20 A"/>
    <property type="chains" value="a=1-148"/>
</dbReference>
<dbReference type="PDB" id="7NWH">
    <property type="method" value="EM"/>
    <property type="resolution" value="4.10 A"/>
    <property type="chains" value="a=2-148"/>
</dbReference>
<dbReference type="PDB" id="7O7Y">
    <property type="method" value="EM"/>
    <property type="resolution" value="2.20 A"/>
    <property type="chains" value="Ba=1-148"/>
</dbReference>
<dbReference type="PDB" id="7O7Z">
    <property type="method" value="EM"/>
    <property type="resolution" value="2.40 A"/>
    <property type="chains" value="Ba=1-148"/>
</dbReference>
<dbReference type="PDB" id="7O80">
    <property type="method" value="EM"/>
    <property type="resolution" value="2.90 A"/>
    <property type="chains" value="Ba=1-148"/>
</dbReference>
<dbReference type="PDB" id="7O81">
    <property type="method" value="EM"/>
    <property type="resolution" value="3.10 A"/>
    <property type="chains" value="Ba=1-148"/>
</dbReference>
<dbReference type="PDB" id="7OBR">
    <property type="method" value="EM"/>
    <property type="resolution" value="2.80 A"/>
    <property type="chains" value="a=2-148"/>
</dbReference>
<dbReference type="PDB" id="7OYD">
    <property type="method" value="EM"/>
    <property type="resolution" value="2.30 A"/>
    <property type="chains" value="a=1-148"/>
</dbReference>
<dbReference type="PDB" id="7QWQ">
    <property type="method" value="EM"/>
    <property type="resolution" value="2.83 A"/>
    <property type="chains" value="a=1-148"/>
</dbReference>
<dbReference type="PDB" id="7QWR">
    <property type="method" value="EM"/>
    <property type="resolution" value="2.90 A"/>
    <property type="chains" value="a=1-148"/>
</dbReference>
<dbReference type="PDB" id="7QWS">
    <property type="method" value="EM"/>
    <property type="resolution" value="3.40 A"/>
    <property type="chains" value="a=1-148"/>
</dbReference>
<dbReference type="PDB" id="7TM3">
    <property type="method" value="EM"/>
    <property type="resolution" value="3.25 A"/>
    <property type="chains" value="a=1-148"/>
</dbReference>
<dbReference type="PDB" id="7TOQ">
    <property type="method" value="EM"/>
    <property type="resolution" value="3.10 A"/>
    <property type="chains" value="AL28=2-148"/>
</dbReference>
<dbReference type="PDB" id="7TOR">
    <property type="method" value="EM"/>
    <property type="resolution" value="2.90 A"/>
    <property type="chains" value="AL28=2-148"/>
</dbReference>
<dbReference type="PDB" id="7TUT">
    <property type="method" value="EM"/>
    <property type="resolution" value="3.88 A"/>
    <property type="chains" value="a=1-148"/>
</dbReference>
<dbReference type="PDB" id="7UCJ">
    <property type="method" value="EM"/>
    <property type="resolution" value="3.10 A"/>
    <property type="chains" value="a=2-148"/>
</dbReference>
<dbReference type="PDB" id="7UCK">
    <property type="method" value="EM"/>
    <property type="resolution" value="2.80 A"/>
    <property type="chains" value="a=2-148"/>
</dbReference>
<dbReference type="PDB" id="7ZJW">
    <property type="method" value="EM"/>
    <property type="resolution" value="2.80 A"/>
    <property type="chains" value="Ld=1-148"/>
</dbReference>
<dbReference type="PDB" id="7ZJX">
    <property type="method" value="EM"/>
    <property type="resolution" value="3.10 A"/>
    <property type="chains" value="Ld=1-148"/>
</dbReference>
<dbReference type="PDB" id="8B5L">
    <property type="method" value="EM"/>
    <property type="resolution" value="2.86 A"/>
    <property type="chains" value="a=2-148"/>
</dbReference>
<dbReference type="PDB" id="8B6C">
    <property type="method" value="EM"/>
    <property type="resolution" value="2.79 A"/>
    <property type="chains" value="a=2-148"/>
</dbReference>
<dbReference type="PDB" id="8BHF">
    <property type="method" value="EM"/>
    <property type="resolution" value="3.10 A"/>
    <property type="chains" value="N1=2-148"/>
</dbReference>
<dbReference type="PDB" id="8BPO">
    <property type="method" value="EM"/>
    <property type="resolution" value="2.80 A"/>
    <property type="chains" value="Z2=1-148"/>
</dbReference>
<dbReference type="PDB" id="8BTK">
    <property type="method" value="EM"/>
    <property type="resolution" value="3.50 A"/>
    <property type="chains" value="Ba=1-148"/>
</dbReference>
<dbReference type="PDB" id="8P2K">
    <property type="method" value="EM"/>
    <property type="resolution" value="2.90 A"/>
    <property type="chains" value="Ba=1-148"/>
</dbReference>
<dbReference type="PDB" id="8RJB">
    <property type="method" value="EM"/>
    <property type="resolution" value="2.69 A"/>
    <property type="chains" value="a=1-148"/>
</dbReference>
<dbReference type="PDB" id="8RJC">
    <property type="method" value="EM"/>
    <property type="resolution" value="2.90 A"/>
    <property type="chains" value="a=1-148"/>
</dbReference>
<dbReference type="PDB" id="8RJD">
    <property type="method" value="EM"/>
    <property type="resolution" value="2.79 A"/>
    <property type="chains" value="a=1-148"/>
</dbReference>
<dbReference type="PDB" id="8SCB">
    <property type="method" value="EM"/>
    <property type="resolution" value="2.50 A"/>
    <property type="chains" value="a=1-148"/>
</dbReference>
<dbReference type="PDB" id="8VFT">
    <property type="method" value="EM"/>
    <property type="resolution" value="3.30 A"/>
    <property type="chains" value="a=1-148"/>
</dbReference>
<dbReference type="PDB" id="9BDL">
    <property type="method" value="EM"/>
    <property type="resolution" value="2.80 A"/>
    <property type="chains" value="AL28=2-148"/>
</dbReference>
<dbReference type="PDB" id="9BDN">
    <property type="method" value="EM"/>
    <property type="resolution" value="3.10 A"/>
    <property type="chains" value="AL28=2-148"/>
</dbReference>
<dbReference type="PDB" id="9BDP">
    <property type="method" value="EM"/>
    <property type="resolution" value="3.70 A"/>
    <property type="chains" value="AL28=2-148"/>
</dbReference>
<dbReference type="PDB" id="9F1B">
    <property type="method" value="EM"/>
    <property type="resolution" value="3.01 A"/>
    <property type="chains" value="Ba=1-148"/>
</dbReference>
<dbReference type="PDB" id="9F1C">
    <property type="method" value="EM"/>
    <property type="resolution" value="3.78 A"/>
    <property type="chains" value="Ba=1-148"/>
</dbReference>
<dbReference type="PDB" id="9F1D">
    <property type="method" value="EM"/>
    <property type="resolution" value="3.26 A"/>
    <property type="chains" value="Ba=1-148"/>
</dbReference>
<dbReference type="PDBsum" id="3JAG"/>
<dbReference type="PDBsum" id="3JAH"/>
<dbReference type="PDBsum" id="3JAI"/>
<dbReference type="PDBsum" id="5LZS"/>
<dbReference type="PDBsum" id="5LZT"/>
<dbReference type="PDBsum" id="5LZU"/>
<dbReference type="PDBsum" id="5LZV"/>
<dbReference type="PDBsum" id="5LZW"/>
<dbReference type="PDBsum" id="5LZX"/>
<dbReference type="PDBsum" id="5LZY"/>
<dbReference type="PDBsum" id="5LZZ"/>
<dbReference type="PDBsum" id="6D90"/>
<dbReference type="PDBsum" id="6D9J"/>
<dbReference type="PDBsum" id="6FTG"/>
<dbReference type="PDBsum" id="6FTI"/>
<dbReference type="PDBsum" id="6FTJ"/>
<dbReference type="PDBsum" id="6HCJ"/>
<dbReference type="PDBsum" id="6MTB"/>
<dbReference type="PDBsum" id="6MTC"/>
<dbReference type="PDBsum" id="6MTD"/>
<dbReference type="PDBsum" id="6MTE"/>
<dbReference type="PDBsum" id="6P5I"/>
<dbReference type="PDBsum" id="6P5J"/>
<dbReference type="PDBsum" id="6P5K"/>
<dbReference type="PDBsum" id="6P5N"/>
<dbReference type="PDBsum" id="6R5Q"/>
<dbReference type="PDBsum" id="6R6G"/>
<dbReference type="PDBsum" id="6R6P"/>
<dbReference type="PDBsum" id="6R7Q"/>
<dbReference type="PDBsum" id="6SGC"/>
<dbReference type="PDBsum" id="6T59"/>
<dbReference type="PDBsum" id="6ZVK"/>
<dbReference type="PDBsum" id="7A01"/>
<dbReference type="PDBsum" id="7MDZ"/>
<dbReference type="PDBsum" id="7NFX"/>
<dbReference type="PDBsum" id="7NWH"/>
<dbReference type="PDBsum" id="7O7Y"/>
<dbReference type="PDBsum" id="7O7Z"/>
<dbReference type="PDBsum" id="7O80"/>
<dbReference type="PDBsum" id="7O81"/>
<dbReference type="PDBsum" id="7OBR"/>
<dbReference type="PDBsum" id="7OYD"/>
<dbReference type="PDBsum" id="7QWQ"/>
<dbReference type="PDBsum" id="7QWR"/>
<dbReference type="PDBsum" id="7QWS"/>
<dbReference type="PDBsum" id="7TM3"/>
<dbReference type="PDBsum" id="7TOQ"/>
<dbReference type="PDBsum" id="7TOR"/>
<dbReference type="PDBsum" id="7TUT"/>
<dbReference type="PDBsum" id="7UCJ"/>
<dbReference type="PDBsum" id="7UCK"/>
<dbReference type="PDBsum" id="7ZJW"/>
<dbReference type="PDBsum" id="7ZJX"/>
<dbReference type="PDBsum" id="8B5L"/>
<dbReference type="PDBsum" id="8B6C"/>
<dbReference type="PDBsum" id="8BHF"/>
<dbReference type="PDBsum" id="8BPO"/>
<dbReference type="PDBsum" id="8BTK"/>
<dbReference type="PDBsum" id="8P2K"/>
<dbReference type="PDBsum" id="8RJB"/>
<dbReference type="PDBsum" id="8RJC"/>
<dbReference type="PDBsum" id="8RJD"/>
<dbReference type="PDBsum" id="8SCB"/>
<dbReference type="PDBsum" id="8VFT"/>
<dbReference type="PDBsum" id="9BDL"/>
<dbReference type="PDBsum" id="9BDN"/>
<dbReference type="PDBsum" id="9BDP"/>
<dbReference type="PDBsum" id="9F1B"/>
<dbReference type="PDBsum" id="9F1C"/>
<dbReference type="PDBsum" id="9F1D"/>
<dbReference type="EMDB" id="EMD-0099"/>
<dbReference type="EMDB" id="EMD-0100"/>
<dbReference type="EMDB" id="EMD-0192"/>
<dbReference type="EMDB" id="EMD-0194"/>
<dbReference type="EMDB" id="EMD-0195"/>
<dbReference type="EMDB" id="EMD-0197"/>
<dbReference type="EMDB" id="EMD-10181"/>
<dbReference type="EMDB" id="EMD-10380"/>
<dbReference type="EMDB" id="EMD-11459"/>
<dbReference type="EMDB" id="EMD-11590"/>
<dbReference type="EMDB" id="EMD-12303"/>
<dbReference type="EMDB" id="EMD-12632"/>
<dbReference type="EMDB" id="EMD-12756"/>
<dbReference type="EMDB" id="EMD-12757"/>
<dbReference type="EMDB" id="EMD-12758"/>
<dbReference type="EMDB" id="EMD-12759"/>
<dbReference type="EMDB" id="EMD-12801"/>
<dbReference type="EMDB" id="EMD-13114"/>
<dbReference type="EMDB" id="EMD-14191"/>
<dbReference type="EMDB" id="EMD-14192"/>
<dbReference type="EMDB" id="EMD-14193"/>
<dbReference type="EMDB" id="EMD-14751"/>
<dbReference type="EMDB" id="EMD-14752"/>
<dbReference type="EMDB" id="EMD-15860"/>
<dbReference type="EMDB" id="EMD-15863"/>
<dbReference type="EMDB" id="EMD-16052"/>
<dbReference type="EMDB" id="EMD-16155"/>
<dbReference type="EMDB" id="EMD-16232"/>
<dbReference type="EMDB" id="EMD-17367"/>
<dbReference type="EMDB" id="EMD-19195"/>
<dbReference type="EMDB" id="EMD-19197"/>
<dbReference type="EMDB" id="EMD-19198"/>
<dbReference type="EMDB" id="EMD-20255"/>
<dbReference type="EMDB" id="EMD-20256"/>
<dbReference type="EMDB" id="EMD-20257"/>
<dbReference type="EMDB" id="EMD-20258"/>
<dbReference type="EMDB" id="EMD-23785"/>
<dbReference type="EMDB" id="EMD-25994"/>
<dbReference type="EMDB" id="EMD-26035"/>
<dbReference type="EMDB" id="EMD-26036"/>
<dbReference type="EMDB" id="EMD-26133"/>
<dbReference type="EMDB" id="EMD-26444"/>
<dbReference type="EMDB" id="EMD-26445"/>
<dbReference type="EMDB" id="EMD-40344"/>
<dbReference type="EMDB" id="EMD-4130"/>
<dbReference type="EMDB" id="EMD-4131"/>
<dbReference type="EMDB" id="EMD-4132"/>
<dbReference type="EMDB" id="EMD-4133"/>
<dbReference type="EMDB" id="EMD-4134"/>
<dbReference type="EMDB" id="EMD-4135"/>
<dbReference type="EMDB" id="EMD-4136"/>
<dbReference type="EMDB" id="EMD-4137"/>
<dbReference type="EMDB" id="EMD-4300"/>
<dbReference type="EMDB" id="EMD-4315"/>
<dbReference type="EMDB" id="EMD-4316"/>
<dbReference type="EMDB" id="EMD-4317"/>
<dbReference type="EMDB" id="EMD-43189"/>
<dbReference type="EMDB" id="EMD-44461"/>
<dbReference type="EMDB" id="EMD-44463"/>
<dbReference type="EMDB" id="EMD-44464"/>
<dbReference type="EMDB" id="EMD-4729"/>
<dbReference type="EMDB" id="EMD-4735"/>
<dbReference type="EMDB" id="EMD-4737"/>
<dbReference type="EMDB" id="EMD-4745"/>
<dbReference type="EMDB" id="EMD-50124"/>
<dbReference type="EMDB" id="EMD-50125"/>
<dbReference type="EMDB" id="EMD-50126"/>
<dbReference type="EMDB" id="EMD-7834"/>
<dbReference type="EMDB" id="EMD-7836"/>
<dbReference type="EMDB" id="EMD-9237"/>
<dbReference type="EMDB" id="EMD-9239"/>
<dbReference type="EMDB" id="EMD-9240"/>
<dbReference type="EMDB" id="EMD-9242"/>
<dbReference type="SMR" id="G1SNY0"/>
<dbReference type="FunCoup" id="G1SNY0">
    <property type="interactions" value="1353"/>
</dbReference>
<dbReference type="IntAct" id="G1SNY0">
    <property type="interactions" value="1"/>
</dbReference>
<dbReference type="STRING" id="9986.ENSOCUP00000004720"/>
<dbReference type="PaxDb" id="9986-ENSOCUP00000004720"/>
<dbReference type="Ensembl" id="ENSOCUT00000005441.3">
    <property type="protein sequence ID" value="ENSOCUP00000004720.3"/>
    <property type="gene ID" value="ENSOCUG00000005442.3"/>
</dbReference>
<dbReference type="Ensembl" id="ENSOCUT00000060580.1">
    <property type="protein sequence ID" value="ENSOCUP00000028278.1"/>
    <property type="gene ID" value="ENSOCUG00000030182.1"/>
</dbReference>
<dbReference type="GeneID" id="100343536"/>
<dbReference type="KEGG" id="ocu:100343536"/>
<dbReference type="KEGG" id="ocu:100350771"/>
<dbReference type="CTD" id="6157"/>
<dbReference type="eggNOG" id="KOG1742">
    <property type="taxonomic scope" value="Eukaryota"/>
</dbReference>
<dbReference type="GeneTree" id="ENSGT00390000005534"/>
<dbReference type="HOGENOM" id="CLU_109163_1_0_1"/>
<dbReference type="OrthoDB" id="61900at2759"/>
<dbReference type="TreeFam" id="TF313742"/>
<dbReference type="Proteomes" id="UP000001811">
    <property type="component" value="Chromosome 1"/>
</dbReference>
<dbReference type="Proteomes" id="UP000001811">
    <property type="component" value="Chromosome 16"/>
</dbReference>
<dbReference type="Bgee" id="ENSOCUG00000005442">
    <property type="expression patterns" value="Expressed in embryo and 14 other cell types or tissues"/>
</dbReference>
<dbReference type="GO" id="GO:0022625">
    <property type="term" value="C:cytosolic large ribosomal subunit"/>
    <property type="evidence" value="ECO:0007669"/>
    <property type="project" value="TreeGrafter"/>
</dbReference>
<dbReference type="GO" id="GO:0003735">
    <property type="term" value="F:structural constituent of ribosome"/>
    <property type="evidence" value="ECO:0007669"/>
    <property type="project" value="InterPro"/>
</dbReference>
<dbReference type="GO" id="GO:0006412">
    <property type="term" value="P:translation"/>
    <property type="evidence" value="ECO:0007669"/>
    <property type="project" value="InterPro"/>
</dbReference>
<dbReference type="FunFam" id="3.100.10.10:FF:000024">
    <property type="entry name" value="RPL27A isoform 10"/>
    <property type="match status" value="1"/>
</dbReference>
<dbReference type="Gene3D" id="3.100.10.10">
    <property type="match status" value="1"/>
</dbReference>
<dbReference type="Gene3D" id="4.10.990.10">
    <property type="match status" value="1"/>
</dbReference>
<dbReference type="HAMAP" id="MF_01341">
    <property type="entry name" value="Ribosomal_uL15"/>
    <property type="match status" value="1"/>
</dbReference>
<dbReference type="InterPro" id="IPR027386">
    <property type="entry name" value="Rbsml_uL15_N"/>
</dbReference>
<dbReference type="InterPro" id="IPR030878">
    <property type="entry name" value="Ribosomal_uL15"/>
</dbReference>
<dbReference type="InterPro" id="IPR021131">
    <property type="entry name" value="Ribosomal_uL15/eL18"/>
</dbReference>
<dbReference type="InterPro" id="IPR036227">
    <property type="entry name" value="Ribosomal_uL15/eL18_sf"/>
</dbReference>
<dbReference type="InterPro" id="IPR001196">
    <property type="entry name" value="Ribosomal_uL15_CS"/>
</dbReference>
<dbReference type="PANTHER" id="PTHR11721">
    <property type="entry name" value="60S RIBOSOMAL PROTEIN L27A"/>
    <property type="match status" value="1"/>
</dbReference>
<dbReference type="PANTHER" id="PTHR11721:SF3">
    <property type="entry name" value="LARGE RIBOSOMAL SUBUNIT PROTEIN UL15"/>
    <property type="match status" value="1"/>
</dbReference>
<dbReference type="Pfam" id="PF00828">
    <property type="entry name" value="Ribosomal_L27A"/>
    <property type="match status" value="1"/>
</dbReference>
<dbReference type="SUPFAM" id="SSF52080">
    <property type="entry name" value="Ribosomal proteins L15p and L18e"/>
    <property type="match status" value="1"/>
</dbReference>
<dbReference type="PROSITE" id="PS00475">
    <property type="entry name" value="RIBOSOMAL_L15"/>
    <property type="match status" value="1"/>
</dbReference>
<evidence type="ECO:0000250" key="1">
    <source>
        <dbReference type="UniProtKB" id="P46776"/>
    </source>
</evidence>
<evidence type="ECO:0000256" key="2">
    <source>
        <dbReference type="SAM" id="MobiDB-lite"/>
    </source>
</evidence>
<evidence type="ECO:0000269" key="3">
    <source>
    </source>
</evidence>
<evidence type="ECO:0000269" key="4">
    <source>
    </source>
</evidence>
<evidence type="ECO:0000269" key="5">
    <source>
    </source>
</evidence>
<evidence type="ECO:0000269" key="6">
    <source>
    </source>
</evidence>
<evidence type="ECO:0000269" key="7">
    <source>
    </source>
</evidence>
<evidence type="ECO:0000269" key="8">
    <source>
    </source>
</evidence>
<evidence type="ECO:0000269" key="9">
    <source>
    </source>
</evidence>
<evidence type="ECO:0000269" key="10">
    <source>
    </source>
</evidence>
<evidence type="ECO:0000269" key="11">
    <source>
    </source>
</evidence>
<evidence type="ECO:0000269" key="12">
    <source>
    </source>
</evidence>
<evidence type="ECO:0000269" key="13">
    <source>
    </source>
</evidence>
<evidence type="ECO:0000269" key="14">
    <source>
    </source>
</evidence>
<evidence type="ECO:0000305" key="15"/>
<evidence type="ECO:0007744" key="16">
    <source>
        <dbReference type="PDB" id="3JAG"/>
    </source>
</evidence>
<evidence type="ECO:0007744" key="17">
    <source>
        <dbReference type="PDB" id="3JAH"/>
    </source>
</evidence>
<evidence type="ECO:0007744" key="18">
    <source>
        <dbReference type="PDB" id="5LZS"/>
    </source>
</evidence>
<evidence type="ECO:0007744" key="19">
    <source>
        <dbReference type="PDB" id="5LZT"/>
    </source>
</evidence>
<evidence type="ECO:0007744" key="20">
    <source>
        <dbReference type="PDB" id="6D90"/>
    </source>
</evidence>
<evidence type="ECO:0007744" key="21">
    <source>
        <dbReference type="PDB" id="6D9J"/>
    </source>
</evidence>
<evidence type="ECO:0007744" key="22">
    <source>
        <dbReference type="PDB" id="6HCJ"/>
    </source>
</evidence>
<evidence type="ECO:0007744" key="23">
    <source>
        <dbReference type="PDB" id="6MTB"/>
    </source>
</evidence>
<evidence type="ECO:0007744" key="24">
    <source>
        <dbReference type="PDB" id="6MTC"/>
    </source>
</evidence>
<evidence type="ECO:0007744" key="25">
    <source>
        <dbReference type="PDB" id="6P5I"/>
    </source>
</evidence>
<evidence type="ECO:0007744" key="26">
    <source>
        <dbReference type="PDB" id="6P5J"/>
    </source>
</evidence>
<evidence type="ECO:0007744" key="27">
    <source>
        <dbReference type="PDB" id="6R5Q"/>
    </source>
</evidence>
<evidence type="ECO:0007744" key="28">
    <source>
        <dbReference type="PDB" id="6R6G"/>
    </source>
</evidence>
<evidence type="ECO:0007744" key="29">
    <source>
        <dbReference type="PDB" id="6SGC"/>
    </source>
</evidence>
<evidence type="ECO:0007744" key="30">
    <source>
        <dbReference type="PDB" id="6ZVK"/>
    </source>
</evidence>
<evidence type="ECO:0007744" key="31">
    <source>
        <dbReference type="PDB" id="7A01"/>
    </source>
</evidence>
<evidence type="ECO:0007744" key="32">
    <source>
        <dbReference type="PDB" id="7OYD"/>
    </source>
</evidence>
<evidence type="ECO:0007744" key="33">
    <source>
        <dbReference type="PDB" id="7UCJ"/>
    </source>
</evidence>
<evidence type="ECO:0007744" key="34">
    <source>
        <dbReference type="PDB" id="7UCK"/>
    </source>
</evidence>
<evidence type="ECO:0007744" key="35">
    <source>
        <dbReference type="PDB" id="7ZJW"/>
    </source>
</evidence>
<evidence type="ECO:0007744" key="36">
    <source>
        <dbReference type="PDB" id="7ZJX"/>
    </source>
</evidence>
<reference key="1">
    <citation type="journal article" date="2011" name="Nature">
        <title>A high-resolution map of human evolutionary constraint using 29 mammals.</title>
        <authorList>
            <person name="Lindblad-Toh K."/>
            <person name="Garber M."/>
            <person name="Zuk O."/>
            <person name="Lin M.F."/>
            <person name="Parker B.J."/>
            <person name="Washietl S."/>
            <person name="Kheradpour P."/>
            <person name="Ernst J."/>
            <person name="Jordan G."/>
            <person name="Mauceli E."/>
            <person name="Ward L.D."/>
            <person name="Lowe C.B."/>
            <person name="Holloway A.K."/>
            <person name="Clamp M."/>
            <person name="Gnerre S."/>
            <person name="Alfoldi J."/>
            <person name="Beal K."/>
            <person name="Chang J."/>
            <person name="Clawson H."/>
            <person name="Cuff J."/>
            <person name="Di Palma F."/>
            <person name="Fitzgerald S."/>
            <person name="Flicek P."/>
            <person name="Guttman M."/>
            <person name="Hubisz M.J."/>
            <person name="Jaffe D.B."/>
            <person name="Jungreis I."/>
            <person name="Kent W.J."/>
            <person name="Kostka D."/>
            <person name="Lara M."/>
            <person name="Martins A.L."/>
            <person name="Massingham T."/>
            <person name="Moltke I."/>
            <person name="Raney B.J."/>
            <person name="Rasmussen M.D."/>
            <person name="Robinson J."/>
            <person name="Stark A."/>
            <person name="Vilella A.J."/>
            <person name="Wen J."/>
            <person name="Xie X."/>
            <person name="Zody M.C."/>
            <person name="Baldwin J."/>
            <person name="Bloom T."/>
            <person name="Chin C.W."/>
            <person name="Heiman D."/>
            <person name="Nicol R."/>
            <person name="Nusbaum C."/>
            <person name="Young S."/>
            <person name="Wilkinson J."/>
            <person name="Worley K.C."/>
            <person name="Kovar C.L."/>
            <person name="Muzny D.M."/>
            <person name="Gibbs R.A."/>
            <person name="Cree A."/>
            <person name="Dihn H.H."/>
            <person name="Fowler G."/>
            <person name="Jhangiani S."/>
            <person name="Joshi V."/>
            <person name="Lee S."/>
            <person name="Lewis L.R."/>
            <person name="Nazareth L.V."/>
            <person name="Okwuonu G."/>
            <person name="Santibanez J."/>
            <person name="Warren W.C."/>
            <person name="Mardis E.R."/>
            <person name="Weinstock G.M."/>
            <person name="Wilson R.K."/>
            <person name="Delehaunty K."/>
            <person name="Dooling D."/>
            <person name="Fronik C."/>
            <person name="Fulton L."/>
            <person name="Fulton B."/>
            <person name="Graves T."/>
            <person name="Minx P."/>
            <person name="Sodergren E."/>
            <person name="Birney E."/>
            <person name="Margulies E.H."/>
            <person name="Herrero J."/>
            <person name="Green E.D."/>
            <person name="Haussler D."/>
            <person name="Siepel A."/>
            <person name="Goldman N."/>
            <person name="Pollard K.S."/>
            <person name="Pedersen J.S."/>
            <person name="Lander E.S."/>
            <person name="Kellis M."/>
        </authorList>
    </citation>
    <scope>NUCLEOTIDE SEQUENCE [LARGE SCALE GENOMIC DNA]</scope>
    <source>
        <strain>Thorbecke</strain>
    </source>
</reference>
<reference evidence="16 17" key="2">
    <citation type="journal article" date="2015" name="Nature">
        <title>Structural basis for stop codon recognition in eukaryotes.</title>
        <authorList>
            <person name="Brown A."/>
            <person name="Shao S."/>
            <person name="Murray J."/>
            <person name="Hegde R.S."/>
            <person name="Ramakrishnan V."/>
        </authorList>
    </citation>
    <scope>STRUCTURE BY ELECTRON MICROSCOPY (3.45 ANGSTROMS) OF 2-148 OF RIBOSOME</scope>
    <scope>FUNCTION</scope>
    <scope>SUBCELLULAR LOCATION</scope>
    <scope>SUBUNIT</scope>
</reference>
<reference evidence="18 19" key="3">
    <citation type="journal article" date="2016" name="Cell">
        <title>Decoding mammalian ribosome-mRNA states by translational GTPase complexes.</title>
        <authorList>
            <person name="Shao S."/>
            <person name="Murray J."/>
            <person name="Brown A."/>
            <person name="Taunton J."/>
            <person name="Ramakrishnan V."/>
            <person name="Hegde R.S."/>
        </authorList>
    </citation>
    <scope>STRUCTURE BY ELECTRON MICROSCOPY (3.31 ANGSTROMS) OF 1-226 OF RIBOSOME</scope>
    <scope>FUNCTION</scope>
    <scope>SUBCELLULAR LOCATION</scope>
    <scope>SUBUNIT</scope>
</reference>
<reference evidence="20 21" key="4">
    <citation type="journal article" date="2018" name="Elife">
        <title>Dual tRNA mimicry in the Cricket paralysis virus IRES uncovers an unexpected similarity with the Hepatitis C Virus IRES.</title>
        <authorList>
            <person name="Pisareva V.P."/>
            <person name="Pisarev A.V."/>
            <person name="Fernandez I.S."/>
        </authorList>
    </citation>
    <scope>STRUCTURE BY ELECTRON MICROSCOPY (3.20 ANGSTROMS) OF RIBOSOME</scope>
    <scope>SUBCELLULAR LOCATION</scope>
    <scope>SUBUNIT</scope>
</reference>
<reference evidence="23 24" key="5">
    <citation type="journal article" date="2018" name="Elife">
        <title>Structures of translationally inactive mammalian ribosomes.</title>
        <authorList>
            <person name="Brown A."/>
            <person name="Baird M.R."/>
            <person name="Yip M.C."/>
            <person name="Murray J."/>
            <person name="Shao S."/>
        </authorList>
    </citation>
    <scope>STRUCTURE BY ELECTRON MICROSCOPY (3.30 ANGSTROMS) OF 2-148 OF RIBOSOME</scope>
    <scope>SUBCELLULAR LOCATION</scope>
    <scope>SUBUNIT</scope>
</reference>
<reference evidence="22" key="6">
    <citation type="journal article" date="2018" name="Mol. Cell">
        <title>ZNF598 is a quality control sensor of collided ribosomes.</title>
        <authorList>
            <person name="Juszkiewicz S."/>
            <person name="Chandrasekaran V."/>
            <person name="Lin Z."/>
            <person name="Kraatz S."/>
            <person name="Ramakrishnan V."/>
            <person name="Hegde R.S."/>
        </authorList>
    </citation>
    <scope>STRUCTURE BY ELECTRON MICROSCOPY (3.80 ANGSTROMS) OF RIBOSOME</scope>
    <scope>SUBCELLULAR LOCATION</scope>
    <scope>SUBUNIT</scope>
</reference>
<reference evidence="27 28" key="7">
    <citation type="journal article" date="2019" name="Elife">
        <title>Structural and mutational analysis of the ribosome-arresting human XBP1u.</title>
        <authorList>
            <person name="Shanmuganathan V."/>
            <person name="Schiller N."/>
            <person name="Magoulopoulou A."/>
            <person name="Cheng J."/>
            <person name="Braunger K."/>
            <person name="Cymer F."/>
            <person name="Berninghausen O."/>
            <person name="Beatrix B."/>
            <person name="Kohno K."/>
            <person name="von Heijne G."/>
            <person name="Beckmann R."/>
        </authorList>
    </citation>
    <scope>STRUCTURE BY ELECTRON MICROSCOPY (3.00 ANGSTROMS) OF 2-148 OF RIBOSOME</scope>
    <scope>SUBCELLULAR LOCATION</scope>
    <scope>SUBUNIT</scope>
</reference>
<reference evidence="25 26" key="8">
    <citation type="journal article" date="2019" name="EMBO J.">
        <title>The Israeli acute paralysis virus IRES captures host ribosomes by mimicking a ribosomal state with hybrid tRNAs.</title>
        <authorList>
            <person name="Acosta-Reyes F."/>
            <person name="Neupane R."/>
            <person name="Frank J."/>
            <person name="Fernandez I.S."/>
        </authorList>
    </citation>
    <scope>STRUCTURE BY ELECTRON MICROSCOPY (3.10 ANGSTROMS) OF RIBOSOME</scope>
    <scope>SUBCELLULAR LOCATION</scope>
    <scope>SUBUNIT</scope>
</reference>
<reference evidence="29" key="9">
    <citation type="journal article" date="2019" name="Nat. Struct. Mol. Biol.">
        <title>Mechanism of ribosome stalling during translation of a poly(A) tail.</title>
        <authorList>
            <person name="Chandrasekaran V."/>
            <person name="Juszkiewicz S."/>
            <person name="Choi J."/>
            <person name="Puglisi J.D."/>
            <person name="Brown A."/>
            <person name="Shao S."/>
            <person name="Ramakrishnan V."/>
            <person name="Hegde R.S."/>
        </authorList>
    </citation>
    <scope>STRUCTURE BY ELECTRON MICROSCOPY (2.80 ANGSTROMS) OF RIBOSOME</scope>
    <scope>SUBCELLULAR LOCATION</scope>
    <scope>SUBUNIT</scope>
</reference>
<reference evidence="30 31" key="10">
    <citation type="journal article" date="2020" name="Cell Rep.">
        <title>The Halastavi arva virus intergenic region IRES promotes translation by the simplest possible initiation mechanism.</title>
        <authorList>
            <person name="Abaeva I.S."/>
            <person name="Vicens Q."/>
            <person name="Bochler A."/>
            <person name="Soufari H."/>
            <person name="Simonetti A."/>
            <person name="Pestova T.V."/>
            <person name="Hashem Y."/>
            <person name="Hellen C.U.T."/>
        </authorList>
    </citation>
    <scope>STRUCTURE BY ELECTRON MICROSCOPY (3.49 ANGSTROMS) OF 2-148 OF RIBOSOME</scope>
    <scope>SUBCELLULAR LOCATION</scope>
    <scope>SUBUNIT</scope>
</reference>
<reference evidence="33 34" key="11">
    <citation type="journal article" date="2022" name="Mol. Cell">
        <title>Direct epitranscriptomic regulation of mammalian translation initiation through N4-acetylcytidine.</title>
        <authorList>
            <person name="Arango D."/>
            <person name="Sturgill D."/>
            <person name="Yang R."/>
            <person name="Kanai T."/>
            <person name="Bauer P."/>
            <person name="Roy J."/>
            <person name="Wang Z."/>
            <person name="Hosogane M."/>
            <person name="Schiffers S."/>
            <person name="Oberdoerffer S."/>
        </authorList>
    </citation>
    <scope>STRUCTURE BY ELECTRON MICROSCOPY (2.80 ANGSTROMS) OF 2-148 OF RIBOSOME</scope>
    <scope>SUBCELLULAR LOCATION</scope>
    <scope>SUBUNIT</scope>
</reference>
<reference evidence="35 36" key="12">
    <citation type="journal article" date="2022" name="Science">
        <title>Structure of the mammalian ribosome as it decodes the selenocysteine UGA codon.</title>
        <authorList>
            <person name="Hilal T."/>
            <person name="Killam B.Y."/>
            <person name="Grozdanovic M."/>
            <person name="Dobosz-Bartoszek M."/>
            <person name="Loerke J."/>
            <person name="Buerger J."/>
            <person name="Mielke T."/>
            <person name="Copeland P.R."/>
            <person name="Simonovic M."/>
            <person name="Spahn C.M.T."/>
        </authorList>
    </citation>
    <scope>STRUCTURE BY ELECTRON MICROSCOPY (2.80 ANGSTROMS) OF RIBOSOME</scope>
    <scope>SUBCELLULAR LOCATION</scope>
    <scope>SUBUNIT</scope>
</reference>
<reference evidence="32" key="13">
    <citation type="journal article" date="2023" name="Nature">
        <title>A molecular network of conserved factors keeps ribosomes dormant in the egg.</title>
        <authorList>
            <person name="Leesch F."/>
            <person name="Lorenzo-Orts L."/>
            <person name="Pribitzer C."/>
            <person name="Grishkovskaya I."/>
            <person name="Roehsner J."/>
            <person name="Chugunova A."/>
            <person name="Matzinger M."/>
            <person name="Roitinger E."/>
            <person name="Belacic K."/>
            <person name="Kandolf S."/>
            <person name="Lin T.Y."/>
            <person name="Mechtler K."/>
            <person name="Meinhart A."/>
            <person name="Haselbach D."/>
            <person name="Pauli A."/>
        </authorList>
    </citation>
    <scope>STRUCTURE BY ELECTRON MICROSCOPY (2.30 ANGSTROMS) OF RIBOSOME</scope>
    <scope>SUBCELLULAR LOCATION</scope>
    <scope>SUBUNIT</scope>
</reference>
<sequence>MPSRLRKTRKLRGHVSHGHGRIGKHRKHPGGRGNAGGMHHHRINFDKYHPGYFGKVGMRHYHLKRNQSFCPTVNLDKLWTLVSEQTRVNAAKNKTGAAPIIDVVRSGYYKVLGKGKLPKQPVIVKAKFFSRRAEEKIKGVGGACVLVA</sequence>
<keyword id="KW-0002">3D-structure</keyword>
<keyword id="KW-0007">Acetylation</keyword>
<keyword id="KW-0963">Cytoplasm</keyword>
<keyword id="KW-0379">Hydroxylation</keyword>
<keyword id="KW-0597">Phosphoprotein</keyword>
<keyword id="KW-1185">Reference proteome</keyword>
<keyword id="KW-0687">Ribonucleoprotein</keyword>
<keyword id="KW-0689">Ribosomal protein</keyword>
<feature type="chain" id="PRO_0000460112" description="Large ribosomal subunit protein uL15">
    <location>
        <begin position="1"/>
        <end position="148"/>
    </location>
</feature>
<feature type="region of interest" description="Disordered" evidence="2">
    <location>
        <begin position="1"/>
        <end position="37"/>
    </location>
</feature>
<feature type="compositionally biased region" description="Basic residues" evidence="2">
    <location>
        <begin position="1"/>
        <end position="30"/>
    </location>
</feature>
<feature type="modified residue" description="(3S)-3-hydroxyhistidine" evidence="1">
    <location>
        <position position="39"/>
    </location>
</feature>
<feature type="modified residue" description="N6-acetyllysine" evidence="1">
    <location>
        <position position="47"/>
    </location>
</feature>
<feature type="modified residue" description="N6-acetyllysine" evidence="1">
    <location>
        <position position="55"/>
    </location>
</feature>
<feature type="modified residue" description="Phosphoserine" evidence="1">
    <location>
        <position position="68"/>
    </location>
</feature>
<feature type="modified residue" description="N6-acetyllysine" evidence="1">
    <location>
        <position position="110"/>
    </location>
</feature>
<comment type="function">
    <text evidence="3 4">Component of the large ribosomal subunit (PubMed:26245381, PubMed:27863242). The ribosome is a large ribonucleoprotein complex responsible for the synthesis of proteins in the cell (PubMed:26245381, PubMed:27863242).</text>
</comment>
<comment type="subunit">
    <text evidence="3 4 5 6 7 8 9 10 11 12 13 14">Component of the large ribosomal subunit.</text>
</comment>
<comment type="subcellular location">
    <subcellularLocation>
        <location evidence="3 4 5 6 7 8 9 10 11 12 13 14">Cytoplasm</location>
    </subcellularLocation>
</comment>
<comment type="PTM">
    <text evidence="1">Hydroxylated on His-39 by MINA.</text>
</comment>
<comment type="similarity">
    <text evidence="15">Belongs to the universal ribosomal protein uL15 family.</text>
</comment>
<organism>
    <name type="scientific">Oryctolagus cuniculus</name>
    <name type="common">Rabbit</name>
    <dbReference type="NCBI Taxonomy" id="9986"/>
    <lineage>
        <taxon>Eukaryota</taxon>
        <taxon>Metazoa</taxon>
        <taxon>Chordata</taxon>
        <taxon>Craniata</taxon>
        <taxon>Vertebrata</taxon>
        <taxon>Euteleostomi</taxon>
        <taxon>Mammalia</taxon>
        <taxon>Eutheria</taxon>
        <taxon>Euarchontoglires</taxon>
        <taxon>Glires</taxon>
        <taxon>Lagomorpha</taxon>
        <taxon>Leporidae</taxon>
        <taxon>Oryctolagus</taxon>
    </lineage>
</organism>